<sequence length="369" mass="40443">MSGYQPPVVIDNGSGMIKAGLAGTREPQFVYPNILGRSKGHTADSRQELCVGDQAQERRSFLSISYPVERGLISSWGDMEIMWKHIYDYNLNLNASDGPVLVTEPALNPLADRQHISEVFFENLGVPAFYMSAQAVLALFAAGFTTGLVLNSGAGITQCVPIFEGYCLSHGVKQLNVAGSDLTSYLMMLLKGDGIMLLRTGDRKVVTDIKENACYVAMNYEDEMTKDSNLEKIYTLPDGKTVKLHKQLFHCPEALFSPYLVNVDAPGIDKMCFGSIMKCDTDLRNSFFSNIILSGGSTSFPGLDKRLIKDVAKLAPANTAVQVIAPPERKISVWMGGSILASLSAFQDMWITAAEFEEVGPNIVHQRCF</sequence>
<organism>
    <name type="scientific">Mus musculus</name>
    <name type="common">Mouse</name>
    <dbReference type="NCBI Taxonomy" id="10090"/>
    <lineage>
        <taxon>Eukaryota</taxon>
        <taxon>Metazoa</taxon>
        <taxon>Chordata</taxon>
        <taxon>Craniata</taxon>
        <taxon>Vertebrata</taxon>
        <taxon>Euteleostomi</taxon>
        <taxon>Mammalia</taxon>
        <taxon>Eutheria</taxon>
        <taxon>Euarchontoglires</taxon>
        <taxon>Glires</taxon>
        <taxon>Rodentia</taxon>
        <taxon>Myomorpha</taxon>
        <taxon>Muroidea</taxon>
        <taxon>Muridae</taxon>
        <taxon>Murinae</taxon>
        <taxon>Mus</taxon>
        <taxon>Mus</taxon>
    </lineage>
</organism>
<gene>
    <name type="primary">Actrt3</name>
    <name type="synonym">Arpm1</name>
</gene>
<comment type="subunit">
    <text evidence="2">Interacts with PFN3.</text>
</comment>
<comment type="interaction">
    <interactant intactId="EBI-6480313">
        <id>Q8BXF8</id>
    </interactant>
    <interactant intactId="EBI-6480328">
        <id>Q9DAD6</id>
        <label>Pfn3</label>
    </interactant>
    <organismsDiffer>false</organismsDiffer>
    <experiments>3</experiments>
</comment>
<comment type="subcellular location">
    <subcellularLocation>
        <location evidence="1">Cytoplasm</location>
        <location evidence="1">Cytoskeleton</location>
    </subcellularLocation>
    <subcellularLocation>
        <location evidence="2">Cytoplasm</location>
    </subcellularLocation>
    <subcellularLocation>
        <location evidence="2">Nucleus</location>
    </subcellularLocation>
    <text>The localization changes from the peripheral region to inside the nucleus during differentiation from round to elongated spermatid.</text>
</comment>
<comment type="tissue specificity">
    <text>Testis specific (at protein level). Expressed specifically in haploid germ cells.</text>
</comment>
<comment type="similarity">
    <text evidence="3">Belongs to the actin family.</text>
</comment>
<comment type="sequence caution" evidence="3">
    <conflict type="erroneous initiation">
        <sequence resource="EMBL-CDS" id="BAB24897"/>
    </conflict>
    <text>Truncated N-terminus.</text>
</comment>
<protein>
    <recommendedName>
        <fullName>Actin-related protein T3</fullName>
        <shortName>ARP-T3</shortName>
    </recommendedName>
    <alternativeName>
        <fullName>Actin-related protein M1</fullName>
    </alternativeName>
</protein>
<feature type="chain" id="PRO_0000089143" description="Actin-related protein T3">
    <location>
        <begin position="1"/>
        <end position="369"/>
    </location>
</feature>
<feature type="sequence conflict" description="In Ref. 1; BAB24897." evidence="3" ref="1">
    <original>M</original>
    <variation>L</variation>
    <location>
        <position position="1"/>
    </location>
</feature>
<feature type="sequence conflict" description="In Ref. 1; BAB24897." evidence="3" ref="1">
    <original>L</original>
    <variation>Q</variation>
    <location>
        <position position="236"/>
    </location>
</feature>
<evidence type="ECO:0000250" key="1"/>
<evidence type="ECO:0000269" key="2">
    <source>
    </source>
</evidence>
<evidence type="ECO:0000305" key="3"/>
<proteinExistence type="evidence at protein level"/>
<name>ACTT3_MOUSE</name>
<accession>Q8BXF8</accession>
<accession>Q3KNH6</accession>
<accession>Q9D9A6</accession>
<reference key="1">
    <citation type="journal article" date="2005" name="Science">
        <title>The transcriptional landscape of the mammalian genome.</title>
        <authorList>
            <person name="Carninci P."/>
            <person name="Kasukawa T."/>
            <person name="Katayama S."/>
            <person name="Gough J."/>
            <person name="Frith M.C."/>
            <person name="Maeda N."/>
            <person name="Oyama R."/>
            <person name="Ravasi T."/>
            <person name="Lenhard B."/>
            <person name="Wells C."/>
            <person name="Kodzius R."/>
            <person name="Shimokawa K."/>
            <person name="Bajic V.B."/>
            <person name="Brenner S.E."/>
            <person name="Batalov S."/>
            <person name="Forrest A.R."/>
            <person name="Zavolan M."/>
            <person name="Davis M.J."/>
            <person name="Wilming L.G."/>
            <person name="Aidinis V."/>
            <person name="Allen J.E."/>
            <person name="Ambesi-Impiombato A."/>
            <person name="Apweiler R."/>
            <person name="Aturaliya R.N."/>
            <person name="Bailey T.L."/>
            <person name="Bansal M."/>
            <person name="Baxter L."/>
            <person name="Beisel K.W."/>
            <person name="Bersano T."/>
            <person name="Bono H."/>
            <person name="Chalk A.M."/>
            <person name="Chiu K.P."/>
            <person name="Choudhary V."/>
            <person name="Christoffels A."/>
            <person name="Clutterbuck D.R."/>
            <person name="Crowe M.L."/>
            <person name="Dalla E."/>
            <person name="Dalrymple B.P."/>
            <person name="de Bono B."/>
            <person name="Della Gatta G."/>
            <person name="di Bernardo D."/>
            <person name="Down T."/>
            <person name="Engstrom P."/>
            <person name="Fagiolini M."/>
            <person name="Faulkner G."/>
            <person name="Fletcher C.F."/>
            <person name="Fukushima T."/>
            <person name="Furuno M."/>
            <person name="Futaki S."/>
            <person name="Gariboldi M."/>
            <person name="Georgii-Hemming P."/>
            <person name="Gingeras T.R."/>
            <person name="Gojobori T."/>
            <person name="Green R.E."/>
            <person name="Gustincich S."/>
            <person name="Harbers M."/>
            <person name="Hayashi Y."/>
            <person name="Hensch T.K."/>
            <person name="Hirokawa N."/>
            <person name="Hill D."/>
            <person name="Huminiecki L."/>
            <person name="Iacono M."/>
            <person name="Ikeo K."/>
            <person name="Iwama A."/>
            <person name="Ishikawa T."/>
            <person name="Jakt M."/>
            <person name="Kanapin A."/>
            <person name="Katoh M."/>
            <person name="Kawasawa Y."/>
            <person name="Kelso J."/>
            <person name="Kitamura H."/>
            <person name="Kitano H."/>
            <person name="Kollias G."/>
            <person name="Krishnan S.P."/>
            <person name="Kruger A."/>
            <person name="Kummerfeld S.K."/>
            <person name="Kurochkin I.V."/>
            <person name="Lareau L.F."/>
            <person name="Lazarevic D."/>
            <person name="Lipovich L."/>
            <person name="Liu J."/>
            <person name="Liuni S."/>
            <person name="McWilliam S."/>
            <person name="Madan Babu M."/>
            <person name="Madera M."/>
            <person name="Marchionni L."/>
            <person name="Matsuda H."/>
            <person name="Matsuzawa S."/>
            <person name="Miki H."/>
            <person name="Mignone F."/>
            <person name="Miyake S."/>
            <person name="Morris K."/>
            <person name="Mottagui-Tabar S."/>
            <person name="Mulder N."/>
            <person name="Nakano N."/>
            <person name="Nakauchi H."/>
            <person name="Ng P."/>
            <person name="Nilsson R."/>
            <person name="Nishiguchi S."/>
            <person name="Nishikawa S."/>
            <person name="Nori F."/>
            <person name="Ohara O."/>
            <person name="Okazaki Y."/>
            <person name="Orlando V."/>
            <person name="Pang K.C."/>
            <person name="Pavan W.J."/>
            <person name="Pavesi G."/>
            <person name="Pesole G."/>
            <person name="Petrovsky N."/>
            <person name="Piazza S."/>
            <person name="Reed J."/>
            <person name="Reid J.F."/>
            <person name="Ring B.Z."/>
            <person name="Ringwald M."/>
            <person name="Rost B."/>
            <person name="Ruan Y."/>
            <person name="Salzberg S.L."/>
            <person name="Sandelin A."/>
            <person name="Schneider C."/>
            <person name="Schoenbach C."/>
            <person name="Sekiguchi K."/>
            <person name="Semple C.A."/>
            <person name="Seno S."/>
            <person name="Sessa L."/>
            <person name="Sheng Y."/>
            <person name="Shibata Y."/>
            <person name="Shimada H."/>
            <person name="Shimada K."/>
            <person name="Silva D."/>
            <person name="Sinclair B."/>
            <person name="Sperling S."/>
            <person name="Stupka E."/>
            <person name="Sugiura K."/>
            <person name="Sultana R."/>
            <person name="Takenaka Y."/>
            <person name="Taki K."/>
            <person name="Tammoja K."/>
            <person name="Tan S.L."/>
            <person name="Tang S."/>
            <person name="Taylor M.S."/>
            <person name="Tegner J."/>
            <person name="Teichmann S.A."/>
            <person name="Ueda H.R."/>
            <person name="van Nimwegen E."/>
            <person name="Verardo R."/>
            <person name="Wei C.L."/>
            <person name="Yagi K."/>
            <person name="Yamanishi H."/>
            <person name="Zabarovsky E."/>
            <person name="Zhu S."/>
            <person name="Zimmer A."/>
            <person name="Hide W."/>
            <person name="Bult C."/>
            <person name="Grimmond S.M."/>
            <person name="Teasdale R.D."/>
            <person name="Liu E.T."/>
            <person name="Brusic V."/>
            <person name="Quackenbush J."/>
            <person name="Wahlestedt C."/>
            <person name="Mattick J.S."/>
            <person name="Hume D.A."/>
            <person name="Kai C."/>
            <person name="Sasaki D."/>
            <person name="Tomaru Y."/>
            <person name="Fukuda S."/>
            <person name="Kanamori-Katayama M."/>
            <person name="Suzuki M."/>
            <person name="Aoki J."/>
            <person name="Arakawa T."/>
            <person name="Iida J."/>
            <person name="Imamura K."/>
            <person name="Itoh M."/>
            <person name="Kato T."/>
            <person name="Kawaji H."/>
            <person name="Kawagashira N."/>
            <person name="Kawashima T."/>
            <person name="Kojima M."/>
            <person name="Kondo S."/>
            <person name="Konno H."/>
            <person name="Nakano K."/>
            <person name="Ninomiya N."/>
            <person name="Nishio T."/>
            <person name="Okada M."/>
            <person name="Plessy C."/>
            <person name="Shibata K."/>
            <person name="Shiraki T."/>
            <person name="Suzuki S."/>
            <person name="Tagami M."/>
            <person name="Waki K."/>
            <person name="Watahiki A."/>
            <person name="Okamura-Oho Y."/>
            <person name="Suzuki H."/>
            <person name="Kawai J."/>
            <person name="Hayashizaki Y."/>
        </authorList>
    </citation>
    <scope>NUCLEOTIDE SEQUENCE [LARGE SCALE MRNA]</scope>
    <source>
        <strain>C57BL/6J</strain>
        <tissue>Cerebellum</tissue>
        <tissue>Testis</tissue>
    </source>
</reference>
<reference key="2">
    <citation type="journal article" date="2004" name="Genome Res.">
        <title>The status, quality, and expansion of the NIH full-length cDNA project: the Mammalian Gene Collection (MGC).</title>
        <authorList>
            <consortium name="The MGC Project Team"/>
        </authorList>
    </citation>
    <scope>NUCLEOTIDE SEQUENCE [LARGE SCALE MRNA]</scope>
</reference>
<reference key="3">
    <citation type="journal article" date="2008" name="FEBS Lett.">
        <title>Nuclear localization of profilin III-ArpM1 complex in mouse spermiogenesis.</title>
        <authorList>
            <person name="Hara Y."/>
            <person name="Yamagata K."/>
            <person name="Oguchi K."/>
            <person name="Baba T."/>
        </authorList>
    </citation>
    <scope>SUBCELLULAR LOCATION</scope>
    <scope>INTERACTION WITH PFN3</scope>
</reference>
<reference key="4">
    <citation type="journal article" date="2010" name="Cell">
        <title>A tissue-specific atlas of mouse protein phosphorylation and expression.</title>
        <authorList>
            <person name="Huttlin E.L."/>
            <person name="Jedrychowski M.P."/>
            <person name="Elias J.E."/>
            <person name="Goswami T."/>
            <person name="Rad R."/>
            <person name="Beausoleil S.A."/>
            <person name="Villen J."/>
            <person name="Haas W."/>
            <person name="Sowa M.E."/>
            <person name="Gygi S.P."/>
        </authorList>
    </citation>
    <scope>IDENTIFICATION BY MASS SPECTROMETRY [LARGE SCALE ANALYSIS]</scope>
    <source>
        <tissue>Testis</tissue>
    </source>
</reference>
<dbReference type="EMBL" id="AK007208">
    <property type="protein sequence ID" value="BAB24897.1"/>
    <property type="status" value="ALT_INIT"/>
    <property type="molecule type" value="mRNA"/>
</dbReference>
<dbReference type="EMBL" id="AK047260">
    <property type="protein sequence ID" value="BAC33006.1"/>
    <property type="molecule type" value="mRNA"/>
</dbReference>
<dbReference type="EMBL" id="BC107277">
    <property type="protein sequence ID" value="AAI07278.1"/>
    <property type="molecule type" value="mRNA"/>
</dbReference>
<dbReference type="EMBL" id="BC107278">
    <property type="protein sequence ID" value="AAI07279.1"/>
    <property type="molecule type" value="mRNA"/>
</dbReference>
<dbReference type="CCDS" id="CCDS17283.1"/>
<dbReference type="RefSeq" id="NP_083966.1">
    <property type="nucleotide sequence ID" value="NM_029690.3"/>
</dbReference>
<dbReference type="SMR" id="Q8BXF8"/>
<dbReference type="FunCoup" id="Q8BXF8">
    <property type="interactions" value="147"/>
</dbReference>
<dbReference type="IntAct" id="Q8BXF8">
    <property type="interactions" value="5"/>
</dbReference>
<dbReference type="MINT" id="Q8BXF8"/>
<dbReference type="STRING" id="10090.ENSMUSP00000048360"/>
<dbReference type="SwissPalm" id="Q8BXF8"/>
<dbReference type="REPRODUCTION-2DPAGE" id="IPI00226663"/>
<dbReference type="PaxDb" id="10090-ENSMUSP00000048360"/>
<dbReference type="ProteomicsDB" id="285721"/>
<dbReference type="Antibodypedia" id="33699">
    <property type="antibodies" value="132 antibodies from 23 providers"/>
</dbReference>
<dbReference type="DNASU" id="76652"/>
<dbReference type="Ensembl" id="ENSMUST00000047630.7">
    <property type="protein sequence ID" value="ENSMUSP00000048360.7"/>
    <property type="gene ID" value="ENSMUSG00000037737.7"/>
</dbReference>
<dbReference type="GeneID" id="76652"/>
<dbReference type="KEGG" id="mmu:76652"/>
<dbReference type="UCSC" id="uc008ouw.1">
    <property type="organism name" value="mouse"/>
</dbReference>
<dbReference type="AGR" id="MGI:1923902"/>
<dbReference type="CTD" id="84517"/>
<dbReference type="MGI" id="MGI:1923902">
    <property type="gene designation" value="Actrt3"/>
</dbReference>
<dbReference type="VEuPathDB" id="HostDB:ENSMUSG00000037737"/>
<dbReference type="eggNOG" id="KOG0676">
    <property type="taxonomic scope" value="Eukaryota"/>
</dbReference>
<dbReference type="GeneTree" id="ENSGT00940000162209"/>
<dbReference type="HOGENOM" id="CLU_027965_0_2_1"/>
<dbReference type="InParanoid" id="Q8BXF8"/>
<dbReference type="OMA" id="WEDMEIM"/>
<dbReference type="OrthoDB" id="6953074at2759"/>
<dbReference type="PhylomeDB" id="Q8BXF8"/>
<dbReference type="TreeFam" id="TF337161"/>
<dbReference type="BioGRID-ORCS" id="76652">
    <property type="hits" value="1 hit in 76 CRISPR screens"/>
</dbReference>
<dbReference type="PRO" id="PR:Q8BXF8"/>
<dbReference type="Proteomes" id="UP000000589">
    <property type="component" value="Chromosome 3"/>
</dbReference>
<dbReference type="RNAct" id="Q8BXF8">
    <property type="molecule type" value="protein"/>
</dbReference>
<dbReference type="Bgee" id="ENSMUSG00000037737">
    <property type="expression patterns" value="Expressed in seminiferous tubule of testis and 17 other cell types or tissues"/>
</dbReference>
<dbReference type="GO" id="GO:0005737">
    <property type="term" value="C:cytoplasm"/>
    <property type="evidence" value="ECO:0007669"/>
    <property type="project" value="UniProtKB-SubCell"/>
</dbReference>
<dbReference type="GO" id="GO:0005856">
    <property type="term" value="C:cytoskeleton"/>
    <property type="evidence" value="ECO:0007669"/>
    <property type="project" value="UniProtKB-SubCell"/>
</dbReference>
<dbReference type="GO" id="GO:0001673">
    <property type="term" value="C:male germ cell nucleus"/>
    <property type="evidence" value="ECO:0000314"/>
    <property type="project" value="UniProtKB"/>
</dbReference>
<dbReference type="CDD" id="cd13397">
    <property type="entry name" value="ASKHA_NBD_actin_Arp-T1-3"/>
    <property type="match status" value="1"/>
</dbReference>
<dbReference type="FunFam" id="3.90.640.10:FF:000007">
    <property type="entry name" value="Actin like 7B"/>
    <property type="match status" value="1"/>
</dbReference>
<dbReference type="FunFam" id="3.30.420.40:FF:000050">
    <property type="entry name" value="Actin, alpha skeletal muscle"/>
    <property type="match status" value="1"/>
</dbReference>
<dbReference type="Gene3D" id="3.30.420.40">
    <property type="match status" value="2"/>
</dbReference>
<dbReference type="Gene3D" id="3.90.640.10">
    <property type="entry name" value="Actin, Chain A, domain 4"/>
    <property type="match status" value="1"/>
</dbReference>
<dbReference type="InterPro" id="IPR004000">
    <property type="entry name" value="Actin"/>
</dbReference>
<dbReference type="InterPro" id="IPR043129">
    <property type="entry name" value="ATPase_NBD"/>
</dbReference>
<dbReference type="PANTHER" id="PTHR11937">
    <property type="entry name" value="ACTIN"/>
    <property type="match status" value="1"/>
</dbReference>
<dbReference type="Pfam" id="PF00022">
    <property type="entry name" value="Actin"/>
    <property type="match status" value="2"/>
</dbReference>
<dbReference type="PRINTS" id="PR00190">
    <property type="entry name" value="ACTIN"/>
</dbReference>
<dbReference type="SMART" id="SM00268">
    <property type="entry name" value="ACTIN"/>
    <property type="match status" value="1"/>
</dbReference>
<dbReference type="SUPFAM" id="SSF53067">
    <property type="entry name" value="Actin-like ATPase domain"/>
    <property type="match status" value="2"/>
</dbReference>
<keyword id="KW-0963">Cytoplasm</keyword>
<keyword id="KW-0206">Cytoskeleton</keyword>
<keyword id="KW-0539">Nucleus</keyword>
<keyword id="KW-1185">Reference proteome</keyword>